<organism>
    <name type="scientific">Escherichia coli O17:K52:H18 (strain UMN026 / ExPEC)</name>
    <dbReference type="NCBI Taxonomy" id="585056"/>
    <lineage>
        <taxon>Bacteria</taxon>
        <taxon>Pseudomonadati</taxon>
        <taxon>Pseudomonadota</taxon>
        <taxon>Gammaproteobacteria</taxon>
        <taxon>Enterobacterales</taxon>
        <taxon>Enterobacteriaceae</taxon>
        <taxon>Escherichia</taxon>
    </lineage>
</organism>
<keyword id="KW-0119">Carbohydrate metabolism</keyword>
<keyword id="KW-0963">Cytoplasm</keyword>
<keyword id="KW-0294">Fucose metabolism</keyword>
<keyword id="KW-0413">Isomerase</keyword>
<gene>
    <name evidence="1" type="primary">fucU</name>
    <name type="ordered locus">ECUMN_3133</name>
</gene>
<evidence type="ECO:0000255" key="1">
    <source>
        <dbReference type="HAMAP-Rule" id="MF_01662"/>
    </source>
</evidence>
<proteinExistence type="inferred from homology"/>
<sequence length="140" mass="15473">MLKTISPLISPELLKVLAEMGHGDEIIFSDAHFPAHSMGPQVIRADGLLVSDLLQAIIPLFELDSYAPPLVMMAAVEGDTLDPEVERRYRNALSLQAPCPDIIRINRFAFYERAQKAFAIVITGERAKYGNILLKKGVTP</sequence>
<protein>
    <recommendedName>
        <fullName evidence="1">L-fucose mutarotase</fullName>
        <ecNumber evidence="1">5.1.3.29</ecNumber>
    </recommendedName>
    <alternativeName>
        <fullName evidence="1">Fucose 1-epimerase</fullName>
    </alternativeName>
    <alternativeName>
        <fullName evidence="1">Type-2 mutarotase</fullName>
    </alternativeName>
</protein>
<comment type="function">
    <text evidence="1">Involved in the anomeric conversion of L-fucose.</text>
</comment>
<comment type="catalytic activity">
    <reaction evidence="1">
        <text>alpha-L-fucose = beta-L-fucose</text>
        <dbReference type="Rhea" id="RHEA:25580"/>
        <dbReference type="ChEBI" id="CHEBI:42548"/>
        <dbReference type="ChEBI" id="CHEBI:42589"/>
        <dbReference type="EC" id="5.1.3.29"/>
    </reaction>
</comment>
<comment type="pathway">
    <text evidence="1">Carbohydrate metabolism; L-fucose metabolism.</text>
</comment>
<comment type="subunit">
    <text evidence="1">Homodecamer.</text>
</comment>
<comment type="subcellular location">
    <subcellularLocation>
        <location evidence="1">Cytoplasm</location>
    </subcellularLocation>
</comment>
<comment type="similarity">
    <text evidence="1">Belongs to the RbsD / FucU family. FucU mutarotase subfamily.</text>
</comment>
<accession>B7N738</accession>
<feature type="chain" id="PRO_1000187182" description="L-fucose mutarotase">
    <location>
        <begin position="1"/>
        <end position="140"/>
    </location>
</feature>
<feature type="active site" description="Proton donor" evidence="1">
    <location>
        <position position="22"/>
    </location>
</feature>
<feature type="binding site" evidence="1">
    <location>
        <position position="30"/>
    </location>
    <ligand>
        <name>substrate</name>
    </ligand>
</feature>
<feature type="binding site" evidence="1">
    <location>
        <position position="107"/>
    </location>
    <ligand>
        <name>substrate</name>
    </ligand>
</feature>
<feature type="binding site" evidence="1">
    <location>
        <begin position="129"/>
        <end position="131"/>
    </location>
    <ligand>
        <name>substrate</name>
    </ligand>
</feature>
<dbReference type="EC" id="5.1.3.29" evidence="1"/>
<dbReference type="EMBL" id="CU928163">
    <property type="protein sequence ID" value="CAR14299.1"/>
    <property type="molecule type" value="Genomic_DNA"/>
</dbReference>
<dbReference type="RefSeq" id="WP_000920840.1">
    <property type="nucleotide sequence ID" value="NC_011751.1"/>
</dbReference>
<dbReference type="RefSeq" id="YP_002413819.1">
    <property type="nucleotide sequence ID" value="NC_011751.1"/>
</dbReference>
<dbReference type="SMR" id="B7N738"/>
<dbReference type="STRING" id="585056.ECUMN_3133"/>
<dbReference type="GeneID" id="93779194"/>
<dbReference type="KEGG" id="eum:ECUMN_3133"/>
<dbReference type="PATRIC" id="fig|585056.7.peg.3315"/>
<dbReference type="HOGENOM" id="CLU_120075_1_0_6"/>
<dbReference type="UniPathway" id="UPA00956"/>
<dbReference type="Proteomes" id="UP000007097">
    <property type="component" value="Chromosome"/>
</dbReference>
<dbReference type="GO" id="GO:0005737">
    <property type="term" value="C:cytoplasm"/>
    <property type="evidence" value="ECO:0007669"/>
    <property type="project" value="UniProtKB-SubCell"/>
</dbReference>
<dbReference type="GO" id="GO:0042806">
    <property type="term" value="F:fucose binding"/>
    <property type="evidence" value="ECO:0007669"/>
    <property type="project" value="InterPro"/>
</dbReference>
<dbReference type="GO" id="GO:0036373">
    <property type="term" value="F:L-fucose mutarotase activity"/>
    <property type="evidence" value="ECO:0007669"/>
    <property type="project" value="UniProtKB-EC"/>
</dbReference>
<dbReference type="GO" id="GO:0036065">
    <property type="term" value="P:fucosylation"/>
    <property type="evidence" value="ECO:0007669"/>
    <property type="project" value="TreeGrafter"/>
</dbReference>
<dbReference type="GO" id="GO:0042354">
    <property type="term" value="P:L-fucose metabolic process"/>
    <property type="evidence" value="ECO:0007669"/>
    <property type="project" value="UniProtKB-UniRule"/>
</dbReference>
<dbReference type="FunFam" id="3.40.1650.10:FF:000001">
    <property type="entry name" value="L-fucose mutarotase"/>
    <property type="match status" value="1"/>
</dbReference>
<dbReference type="Gene3D" id="3.40.1650.10">
    <property type="entry name" value="RbsD-like domain"/>
    <property type="match status" value="1"/>
</dbReference>
<dbReference type="HAMAP" id="MF_01662">
    <property type="entry name" value="L_fucose_rotase"/>
    <property type="match status" value="1"/>
</dbReference>
<dbReference type="InterPro" id="IPR023751">
    <property type="entry name" value="L-fucose_mutarotase"/>
</dbReference>
<dbReference type="InterPro" id="IPR023750">
    <property type="entry name" value="RbsD-like_sf"/>
</dbReference>
<dbReference type="InterPro" id="IPR050443">
    <property type="entry name" value="RbsD/FucU_mutarotase"/>
</dbReference>
<dbReference type="InterPro" id="IPR007721">
    <property type="entry name" value="RbsD_FucU"/>
</dbReference>
<dbReference type="NCBIfam" id="NF011949">
    <property type="entry name" value="PRK15420.1"/>
    <property type="match status" value="1"/>
</dbReference>
<dbReference type="PANTHER" id="PTHR31690">
    <property type="entry name" value="FUCOSE MUTAROTASE"/>
    <property type="match status" value="1"/>
</dbReference>
<dbReference type="PANTHER" id="PTHR31690:SF4">
    <property type="entry name" value="FUCOSE MUTAROTASE"/>
    <property type="match status" value="1"/>
</dbReference>
<dbReference type="Pfam" id="PF05025">
    <property type="entry name" value="RbsD_FucU"/>
    <property type="match status" value="1"/>
</dbReference>
<dbReference type="SUPFAM" id="SSF102546">
    <property type="entry name" value="RbsD-like"/>
    <property type="match status" value="1"/>
</dbReference>
<reference key="1">
    <citation type="journal article" date="2009" name="PLoS Genet.">
        <title>Organised genome dynamics in the Escherichia coli species results in highly diverse adaptive paths.</title>
        <authorList>
            <person name="Touchon M."/>
            <person name="Hoede C."/>
            <person name="Tenaillon O."/>
            <person name="Barbe V."/>
            <person name="Baeriswyl S."/>
            <person name="Bidet P."/>
            <person name="Bingen E."/>
            <person name="Bonacorsi S."/>
            <person name="Bouchier C."/>
            <person name="Bouvet O."/>
            <person name="Calteau A."/>
            <person name="Chiapello H."/>
            <person name="Clermont O."/>
            <person name="Cruveiller S."/>
            <person name="Danchin A."/>
            <person name="Diard M."/>
            <person name="Dossat C."/>
            <person name="Karoui M.E."/>
            <person name="Frapy E."/>
            <person name="Garry L."/>
            <person name="Ghigo J.M."/>
            <person name="Gilles A.M."/>
            <person name="Johnson J."/>
            <person name="Le Bouguenec C."/>
            <person name="Lescat M."/>
            <person name="Mangenot S."/>
            <person name="Martinez-Jehanne V."/>
            <person name="Matic I."/>
            <person name="Nassif X."/>
            <person name="Oztas S."/>
            <person name="Petit M.A."/>
            <person name="Pichon C."/>
            <person name="Rouy Z."/>
            <person name="Ruf C.S."/>
            <person name="Schneider D."/>
            <person name="Tourret J."/>
            <person name="Vacherie B."/>
            <person name="Vallenet D."/>
            <person name="Medigue C."/>
            <person name="Rocha E.P.C."/>
            <person name="Denamur E."/>
        </authorList>
    </citation>
    <scope>NUCLEOTIDE SEQUENCE [LARGE SCALE GENOMIC DNA]</scope>
    <source>
        <strain>UMN026 / ExPEC</strain>
    </source>
</reference>
<name>FUCM_ECOLU</name>